<feature type="peptide" id="PRO_0000378648" description="Hypertrehalosaemic factor" evidence="3">
    <location>
        <begin position="1"/>
        <end position="10"/>
    </location>
</feature>
<feature type="modified residue" description="Pyrrolidone carboxylic acid" evidence="3">
    <location>
        <position position="1"/>
    </location>
</feature>
<feature type="modified residue" description="Threonine amide" evidence="3">
    <location>
        <position position="10"/>
    </location>
</feature>
<proteinExistence type="evidence at protein level"/>
<keyword id="KW-0027">Amidation</keyword>
<keyword id="KW-0903">Direct protein sequencing</keyword>
<keyword id="KW-0372">Hormone</keyword>
<keyword id="KW-0527">Neuropeptide</keyword>
<keyword id="KW-0873">Pyrrolidone carboxylic acid</keyword>
<keyword id="KW-0964">Secreted</keyword>
<evidence type="ECO:0000250" key="1">
    <source>
        <dbReference type="UniProtKB" id="P67790"/>
    </source>
</evidence>
<evidence type="ECO:0000255" key="2"/>
<evidence type="ECO:0000269" key="3">
    <source>
    </source>
</evidence>
<evidence type="ECO:0000303" key="4">
    <source>
    </source>
</evidence>
<evidence type="ECO:0000305" key="5"/>
<comment type="function">
    <text evidence="5">Hypertrehalosaemic factors are neuropeptides that elevate the level of trehalose in the hemolymph (trehalose is the major carbohydrate in the hemolymph of insects).</text>
</comment>
<comment type="subcellular location">
    <subcellularLocation>
        <location evidence="5">Secreted</location>
    </subcellularLocation>
</comment>
<comment type="similarity">
    <text evidence="2">Belongs to the AKH/HRTH/RPCH family.</text>
</comment>
<sequence length="10" mass="1092">QVNFSPGWGT</sequence>
<organism>
    <name type="scientific">Eublaberus sp. (strain BF-2008)</name>
    <name type="common">Cockroach</name>
    <dbReference type="NCBI Taxonomy" id="521510"/>
    <lineage>
        <taxon>Eukaryota</taxon>
        <taxon>Metazoa</taxon>
        <taxon>Ecdysozoa</taxon>
        <taxon>Arthropoda</taxon>
        <taxon>Hexapoda</taxon>
        <taxon>Insecta</taxon>
        <taxon>Pterygota</taxon>
        <taxon>Neoptera</taxon>
        <taxon>Polyneoptera</taxon>
        <taxon>Dictyoptera</taxon>
        <taxon>Blattodea</taxon>
        <taxon>Blaberoidea</taxon>
        <taxon>Blaberidae</taxon>
        <taxon>Blaberinae</taxon>
        <taxon>Eublaberus</taxon>
    </lineage>
</organism>
<accession>P85630</accession>
<protein>
    <recommendedName>
        <fullName evidence="1">Hypertrehalosaemic factor</fullName>
    </recommendedName>
    <alternativeName>
        <fullName evidence="4">Adipokinetic hormone 1</fullName>
        <shortName evidence="4">EubSp-AKH-1</shortName>
    </alternativeName>
    <alternativeName>
        <fullName evidence="1">Hypertrehalosaemic neuropeptide</fullName>
    </alternativeName>
</protein>
<reference evidence="5" key="1">
    <citation type="journal article" date="2009" name="BMC Evol. Biol.">
        <title>A proteomic approach for studying insect phylogeny: CAPA peptides of ancient insect taxa (Dictyoptera, Blattoptera) as a test case.</title>
        <authorList>
            <person name="Roth S."/>
            <person name="Fromm B."/>
            <person name="Gaede G."/>
            <person name="Predel R."/>
        </authorList>
    </citation>
    <scope>PROTEIN SEQUENCE</scope>
    <scope>PYROGLUTAMATE FORMATION AT GLN-1</scope>
    <scope>AMIDATION AT THR-10</scope>
    <source>
        <tissue evidence="3">Corpora cardiaca</tissue>
    </source>
</reference>
<name>HTF_EUBSB</name>
<dbReference type="GO" id="GO:0005576">
    <property type="term" value="C:extracellular region"/>
    <property type="evidence" value="ECO:0007669"/>
    <property type="project" value="UniProtKB-SubCell"/>
</dbReference>
<dbReference type="GO" id="GO:0005179">
    <property type="term" value="F:hormone activity"/>
    <property type="evidence" value="ECO:0007669"/>
    <property type="project" value="UniProtKB-KW"/>
</dbReference>
<dbReference type="GO" id="GO:0007218">
    <property type="term" value="P:neuropeptide signaling pathway"/>
    <property type="evidence" value="ECO:0007669"/>
    <property type="project" value="UniProtKB-KW"/>
</dbReference>
<dbReference type="InterPro" id="IPR002047">
    <property type="entry name" value="Adipokinetic_hormone_CS"/>
</dbReference>
<dbReference type="PROSITE" id="PS00256">
    <property type="entry name" value="AKH"/>
    <property type="match status" value="1"/>
</dbReference>